<accession>Q58216</accession>
<keyword id="KW-0378">Hydrolase</keyword>
<keyword id="KW-0464">Manganese</keyword>
<keyword id="KW-0479">Metal-binding</keyword>
<keyword id="KW-1185">Reference proteome</keyword>
<reference key="1">
    <citation type="journal article" date="1996" name="Science">
        <title>Complete genome sequence of the methanogenic archaeon, Methanococcus jannaschii.</title>
        <authorList>
            <person name="Bult C.J."/>
            <person name="White O."/>
            <person name="Olsen G.J."/>
            <person name="Zhou L."/>
            <person name="Fleischmann R.D."/>
            <person name="Sutton G.G."/>
            <person name="Blake J.A."/>
            <person name="FitzGerald L.M."/>
            <person name="Clayton R.A."/>
            <person name="Gocayne J.D."/>
            <person name="Kerlavage A.R."/>
            <person name="Dougherty B.A."/>
            <person name="Tomb J.-F."/>
            <person name="Adams M.D."/>
            <person name="Reich C.I."/>
            <person name="Overbeek R."/>
            <person name="Kirkness E.F."/>
            <person name="Weinstock K.G."/>
            <person name="Merrick J.M."/>
            <person name="Glodek A."/>
            <person name="Scott J.L."/>
            <person name="Geoghagen N.S.M."/>
            <person name="Weidman J.F."/>
            <person name="Fuhrmann J.L."/>
            <person name="Nguyen D."/>
            <person name="Utterback T.R."/>
            <person name="Kelley J.M."/>
            <person name="Peterson J.D."/>
            <person name="Sadow P.W."/>
            <person name="Hanna M.C."/>
            <person name="Cotton M.D."/>
            <person name="Roberts K.M."/>
            <person name="Hurst M.A."/>
            <person name="Kaine B.P."/>
            <person name="Borodovsky M."/>
            <person name="Klenk H.-P."/>
            <person name="Fraser C.M."/>
            <person name="Smith H.O."/>
            <person name="Woese C.R."/>
            <person name="Venter J.C."/>
        </authorList>
    </citation>
    <scope>NUCLEOTIDE SEQUENCE [LARGE SCALE GENOMIC DNA]</scope>
    <source>
        <strain>ATCC 43067 / DSM 2661 / JAL-1 / JCM 10045 / NBRC 100440</strain>
    </source>
</reference>
<organism>
    <name type="scientific">Methanocaldococcus jannaschii (strain ATCC 43067 / DSM 2661 / JAL-1 / JCM 10045 / NBRC 100440)</name>
    <name type="common">Methanococcus jannaschii</name>
    <dbReference type="NCBI Taxonomy" id="243232"/>
    <lineage>
        <taxon>Archaea</taxon>
        <taxon>Methanobacteriati</taxon>
        <taxon>Methanobacteriota</taxon>
        <taxon>Methanomada group</taxon>
        <taxon>Methanococci</taxon>
        <taxon>Methanococcales</taxon>
        <taxon>Methanocaldococcaceae</taxon>
        <taxon>Methanocaldococcus</taxon>
    </lineage>
</organism>
<gene>
    <name type="ordered locus">MJ0806</name>
</gene>
<comment type="cofactor">
    <cofactor evidence="2">
        <name>Mn(2+)</name>
        <dbReference type="ChEBI" id="CHEBI:29035"/>
    </cofactor>
    <text evidence="2">Binds 2 manganese ions per subunit.</text>
</comment>
<comment type="similarity">
    <text evidence="2">Belongs to the peptidase M24B family.</text>
</comment>
<name>Y806_METJA</name>
<sequence length="347" mass="40549">MQKTIGDIMNNRIERFLKYMESEGIKKAVILKKENINYFLGKYFMSFSVLVFEEQPYLYVGKLDKDYAEEHFNFLEIREFKSWEEIFKGCDGVEKELSIGYLKYIDKEYKIISDKIKEMRMIKDKEEIKLIKKAAEISDKAINWVLNNLDEVKNLTEYELVAEIEYIMKKHGSIKPAFDSIVVSGKKTSFPHALPTKDKIADILLVDIGAVYEGYCSDITRTFLLKDDEEMKKIYNLVYEAKKVAEEHLKEGISAKQIDNIVREFFNDYKELFIHSLGHGVGLEVHEEPRLSNKLKDDEDIILKEGMVVTIEPGLYLKDKFGVRIEDLYLVKKNGFEKLSKAEISEY</sequence>
<dbReference type="EC" id="3.4.-.-"/>
<dbReference type="EMBL" id="L77117">
    <property type="protein sequence ID" value="AAB98806.1"/>
    <property type="molecule type" value="Genomic_DNA"/>
</dbReference>
<dbReference type="PIR" id="F64400">
    <property type="entry name" value="F64400"/>
</dbReference>
<dbReference type="SMR" id="Q58216"/>
<dbReference type="FunCoup" id="Q58216">
    <property type="interactions" value="83"/>
</dbReference>
<dbReference type="STRING" id="243232.MJ_0806"/>
<dbReference type="PaxDb" id="243232-MJ_0806"/>
<dbReference type="EnsemblBacteria" id="AAB98806">
    <property type="protein sequence ID" value="AAB98806"/>
    <property type="gene ID" value="MJ_0806"/>
</dbReference>
<dbReference type="KEGG" id="mja:MJ_0806"/>
<dbReference type="eggNOG" id="arCOG01000">
    <property type="taxonomic scope" value="Archaea"/>
</dbReference>
<dbReference type="HOGENOM" id="CLU_017266_4_2_2"/>
<dbReference type="InParanoid" id="Q58216"/>
<dbReference type="PhylomeDB" id="Q58216"/>
<dbReference type="Proteomes" id="UP000000805">
    <property type="component" value="Chromosome"/>
</dbReference>
<dbReference type="GO" id="GO:0046872">
    <property type="term" value="F:metal ion binding"/>
    <property type="evidence" value="ECO:0007669"/>
    <property type="project" value="UniProtKB-KW"/>
</dbReference>
<dbReference type="GO" id="GO:0070006">
    <property type="term" value="F:metalloaminopeptidase activity"/>
    <property type="evidence" value="ECO:0000318"/>
    <property type="project" value="GO_Central"/>
</dbReference>
<dbReference type="GO" id="GO:0006508">
    <property type="term" value="P:proteolysis"/>
    <property type="evidence" value="ECO:0000318"/>
    <property type="project" value="GO_Central"/>
</dbReference>
<dbReference type="CDD" id="cd01092">
    <property type="entry name" value="APP-like"/>
    <property type="match status" value="1"/>
</dbReference>
<dbReference type="Gene3D" id="3.90.230.10">
    <property type="entry name" value="Creatinase/methionine aminopeptidase superfamily"/>
    <property type="match status" value="1"/>
</dbReference>
<dbReference type="Gene3D" id="3.40.350.10">
    <property type="entry name" value="Creatinase/prolidase N-terminal domain"/>
    <property type="match status" value="1"/>
</dbReference>
<dbReference type="InterPro" id="IPR029149">
    <property type="entry name" value="Creatin/AminoP/Spt16_N"/>
</dbReference>
<dbReference type="InterPro" id="IPR036005">
    <property type="entry name" value="Creatinase/aminopeptidase-like"/>
</dbReference>
<dbReference type="InterPro" id="IPR000587">
    <property type="entry name" value="Creatinase_N"/>
</dbReference>
<dbReference type="InterPro" id="IPR000994">
    <property type="entry name" value="Pept_M24"/>
</dbReference>
<dbReference type="InterPro" id="IPR001714">
    <property type="entry name" value="Pept_M24_MAP"/>
</dbReference>
<dbReference type="InterPro" id="IPR050659">
    <property type="entry name" value="Peptidase_M24B"/>
</dbReference>
<dbReference type="InterPro" id="IPR001131">
    <property type="entry name" value="Peptidase_M24B_aminopep-P_CS"/>
</dbReference>
<dbReference type="PANTHER" id="PTHR46112">
    <property type="entry name" value="AMINOPEPTIDASE"/>
    <property type="match status" value="1"/>
</dbReference>
<dbReference type="PANTHER" id="PTHR46112:SF2">
    <property type="entry name" value="XAA-PRO AMINOPEPTIDASE P-RELATED"/>
    <property type="match status" value="1"/>
</dbReference>
<dbReference type="Pfam" id="PF01321">
    <property type="entry name" value="Creatinase_N"/>
    <property type="match status" value="1"/>
</dbReference>
<dbReference type="Pfam" id="PF00557">
    <property type="entry name" value="Peptidase_M24"/>
    <property type="match status" value="1"/>
</dbReference>
<dbReference type="PRINTS" id="PR00599">
    <property type="entry name" value="MAPEPTIDASE"/>
</dbReference>
<dbReference type="SUPFAM" id="SSF55920">
    <property type="entry name" value="Creatinase/aminopeptidase"/>
    <property type="match status" value="1"/>
</dbReference>
<dbReference type="SUPFAM" id="SSF53092">
    <property type="entry name" value="Creatinase/prolidase N-terminal domain"/>
    <property type="match status" value="1"/>
</dbReference>
<dbReference type="PROSITE" id="PS00491">
    <property type="entry name" value="PROLINE_PEPTIDASE"/>
    <property type="match status" value="1"/>
</dbReference>
<feature type="chain" id="PRO_0000185104" description="Uncharacterized peptidase MJ0806">
    <location>
        <begin position="1"/>
        <end position="347"/>
    </location>
</feature>
<feature type="binding site" evidence="1">
    <location>
        <position position="207"/>
    </location>
    <ligand>
        <name>Mn(2+)</name>
        <dbReference type="ChEBI" id="CHEBI:29035"/>
        <label>2</label>
    </ligand>
</feature>
<feature type="binding site" evidence="1">
    <location>
        <position position="218"/>
    </location>
    <ligand>
        <name>Mn(2+)</name>
        <dbReference type="ChEBI" id="CHEBI:29035"/>
        <label>1</label>
    </ligand>
</feature>
<feature type="binding site" evidence="1">
    <location>
        <position position="218"/>
    </location>
    <ligand>
        <name>Mn(2+)</name>
        <dbReference type="ChEBI" id="CHEBI:29035"/>
        <label>2</label>
    </ligand>
</feature>
<feature type="binding site" evidence="1">
    <location>
        <position position="279"/>
    </location>
    <ligand>
        <name>Mn(2+)</name>
        <dbReference type="ChEBI" id="CHEBI:29035"/>
        <label>1</label>
    </ligand>
</feature>
<feature type="binding site" evidence="1">
    <location>
        <position position="312"/>
    </location>
    <ligand>
        <name>Mn(2+)</name>
        <dbReference type="ChEBI" id="CHEBI:29035"/>
        <label>1</label>
    </ligand>
</feature>
<feature type="binding site" evidence="1">
    <location>
        <position position="326"/>
    </location>
    <ligand>
        <name>Mn(2+)</name>
        <dbReference type="ChEBI" id="CHEBI:29035"/>
        <label>1</label>
    </ligand>
</feature>
<feature type="binding site" evidence="1">
    <location>
        <position position="326"/>
    </location>
    <ligand>
        <name>Mn(2+)</name>
        <dbReference type="ChEBI" id="CHEBI:29035"/>
        <label>2</label>
    </ligand>
</feature>
<proteinExistence type="inferred from homology"/>
<protein>
    <recommendedName>
        <fullName>Uncharacterized peptidase MJ0806</fullName>
        <ecNumber>3.4.-.-</ecNumber>
    </recommendedName>
</protein>
<evidence type="ECO:0000255" key="1"/>
<evidence type="ECO:0000305" key="2"/>